<sequence length="195" mass="21604">MYLEQVKTELFEAQDVLNKFISNEQNIKLIQQAALLISDSFKQHGKVLSCGNGGSHCDAMHFAEELTGRYRENRPGYPAIAISDVSHLSCVSNDFGYEHVFSRYVEAVGQKGDVLLGISTSGNSKNVLNAIEAAKAKGMKVIALTGKDGGKMAGLADVEIRVPHFRFADRIQEIHIKVIHILIMLIEFEMAKIRQ</sequence>
<comment type="function">
    <text evidence="1">Catalyzes the isomerization of sedoheptulose 7-phosphate in D-glycero-D-manno-heptose 7-phosphate.</text>
</comment>
<comment type="catalytic activity">
    <reaction evidence="1">
        <text>2 D-sedoheptulose 7-phosphate = D-glycero-alpha-D-manno-heptose 7-phosphate + D-glycero-beta-D-manno-heptose 7-phosphate</text>
        <dbReference type="Rhea" id="RHEA:27489"/>
        <dbReference type="ChEBI" id="CHEBI:57483"/>
        <dbReference type="ChEBI" id="CHEBI:60203"/>
        <dbReference type="ChEBI" id="CHEBI:60204"/>
        <dbReference type="EC" id="5.3.1.28"/>
    </reaction>
</comment>
<comment type="cofactor">
    <cofactor evidence="1">
        <name>Zn(2+)</name>
        <dbReference type="ChEBI" id="CHEBI:29105"/>
    </cofactor>
    <text evidence="1">Binds 1 zinc ion per subunit.</text>
</comment>
<comment type="pathway">
    <text evidence="1">Carbohydrate biosynthesis; D-glycero-D-manno-heptose 7-phosphate biosynthesis; D-glycero-alpha-D-manno-heptose 7-phosphate and D-glycero-beta-D-manno-heptose 7-phosphate from sedoheptulose 7-phosphate: step 1/1.</text>
</comment>
<comment type="subunit">
    <text evidence="1">Homotetramer.</text>
</comment>
<comment type="subcellular location">
    <subcellularLocation>
        <location evidence="1">Cytoplasm</location>
    </subcellularLocation>
</comment>
<comment type="miscellaneous">
    <text evidence="1">The reaction produces a racemic mixture of D-glycero-alpha-D-manno-heptose 7-phosphate and D-glycero-beta-D-manno-heptose 7-phosphate.</text>
</comment>
<comment type="similarity">
    <text evidence="1">Belongs to the SIS family. GmhA subfamily.</text>
</comment>
<gene>
    <name evidence="1" type="primary">gmhA</name>
    <name type="ordered locus">HSM_0840</name>
</gene>
<feature type="chain" id="PRO_1000075098" description="Phosphoheptose isomerase">
    <location>
        <begin position="1"/>
        <end position="195"/>
    </location>
</feature>
<feature type="domain" description="SIS" evidence="1">
    <location>
        <begin position="37"/>
        <end position="195"/>
    </location>
</feature>
<feature type="binding site" evidence="1">
    <location>
        <begin position="52"/>
        <end position="54"/>
    </location>
    <ligand>
        <name>substrate</name>
    </ligand>
</feature>
<feature type="binding site" evidence="1">
    <location>
        <position position="61"/>
    </location>
    <ligand>
        <name>Zn(2+)</name>
        <dbReference type="ChEBI" id="CHEBI:29105"/>
    </ligand>
</feature>
<feature type="binding site" evidence="1">
    <location>
        <position position="65"/>
    </location>
    <ligand>
        <name>substrate</name>
    </ligand>
</feature>
<feature type="binding site" evidence="1">
    <location>
        <position position="65"/>
    </location>
    <ligand>
        <name>Zn(2+)</name>
        <dbReference type="ChEBI" id="CHEBI:29105"/>
    </ligand>
</feature>
<feature type="binding site" evidence="1">
    <location>
        <begin position="93"/>
        <end position="94"/>
    </location>
    <ligand>
        <name>substrate</name>
    </ligand>
</feature>
<feature type="binding site" evidence="1">
    <location>
        <begin position="119"/>
        <end position="121"/>
    </location>
    <ligand>
        <name>substrate</name>
    </ligand>
</feature>
<feature type="binding site" evidence="1">
    <location>
        <position position="124"/>
    </location>
    <ligand>
        <name>substrate</name>
    </ligand>
</feature>
<feature type="binding site" evidence="1">
    <location>
        <position position="172"/>
    </location>
    <ligand>
        <name>substrate</name>
    </ligand>
</feature>
<feature type="binding site" evidence="1">
    <location>
        <position position="172"/>
    </location>
    <ligand>
        <name>Zn(2+)</name>
        <dbReference type="ChEBI" id="CHEBI:29105"/>
    </ligand>
</feature>
<feature type="binding site" evidence="1">
    <location>
        <position position="180"/>
    </location>
    <ligand>
        <name>Zn(2+)</name>
        <dbReference type="ChEBI" id="CHEBI:29105"/>
    </ligand>
</feature>
<evidence type="ECO:0000255" key="1">
    <source>
        <dbReference type="HAMAP-Rule" id="MF_00067"/>
    </source>
</evidence>
<keyword id="KW-0119">Carbohydrate metabolism</keyword>
<keyword id="KW-0963">Cytoplasm</keyword>
<keyword id="KW-0413">Isomerase</keyword>
<keyword id="KW-0479">Metal-binding</keyword>
<keyword id="KW-0862">Zinc</keyword>
<reference key="1">
    <citation type="submission" date="2008-02" db="EMBL/GenBank/DDBJ databases">
        <title>Complete sequence of Haemophilus somnus 2336.</title>
        <authorList>
            <consortium name="US DOE Joint Genome Institute"/>
            <person name="Siddaramappa S."/>
            <person name="Duncan A.J."/>
            <person name="Challacombe J.F."/>
            <person name="Rainey D."/>
            <person name="Gillaspy A.F."/>
            <person name="Carson M."/>
            <person name="Gipson J."/>
            <person name="Gipson M."/>
            <person name="Bruce D."/>
            <person name="Detter J.C."/>
            <person name="Han C.S."/>
            <person name="Land M."/>
            <person name="Tapia R."/>
            <person name="Thompson L.S."/>
            <person name="Orvis J."/>
            <person name="Zaitshik J."/>
            <person name="Barnes G."/>
            <person name="Brettin T.S."/>
            <person name="Dyer D.W."/>
            <person name="Inzana T.J."/>
        </authorList>
    </citation>
    <scope>NUCLEOTIDE SEQUENCE [LARGE SCALE GENOMIC DNA]</scope>
    <source>
        <strain>2336</strain>
    </source>
</reference>
<accession>B0USS3</accession>
<dbReference type="EC" id="5.3.1.28" evidence="1"/>
<dbReference type="EMBL" id="CP000947">
    <property type="protein sequence ID" value="ACA32513.1"/>
    <property type="molecule type" value="Genomic_DNA"/>
</dbReference>
<dbReference type="RefSeq" id="WP_012341650.1">
    <property type="nucleotide sequence ID" value="NC_010519.1"/>
</dbReference>
<dbReference type="SMR" id="B0USS3"/>
<dbReference type="STRING" id="228400.HSM_0840"/>
<dbReference type="GeneID" id="31487127"/>
<dbReference type="KEGG" id="hsm:HSM_0840"/>
<dbReference type="HOGENOM" id="CLU_080999_4_0_6"/>
<dbReference type="UniPathway" id="UPA00041">
    <property type="reaction ID" value="UER00436"/>
</dbReference>
<dbReference type="GO" id="GO:0005737">
    <property type="term" value="C:cytoplasm"/>
    <property type="evidence" value="ECO:0007669"/>
    <property type="project" value="UniProtKB-SubCell"/>
</dbReference>
<dbReference type="GO" id="GO:0097367">
    <property type="term" value="F:carbohydrate derivative binding"/>
    <property type="evidence" value="ECO:0007669"/>
    <property type="project" value="InterPro"/>
</dbReference>
<dbReference type="GO" id="GO:0008968">
    <property type="term" value="F:D-sedoheptulose 7-phosphate isomerase activity"/>
    <property type="evidence" value="ECO:0007669"/>
    <property type="project" value="UniProtKB-UniRule"/>
</dbReference>
<dbReference type="GO" id="GO:0008270">
    <property type="term" value="F:zinc ion binding"/>
    <property type="evidence" value="ECO:0007669"/>
    <property type="project" value="UniProtKB-UniRule"/>
</dbReference>
<dbReference type="GO" id="GO:0005975">
    <property type="term" value="P:carbohydrate metabolic process"/>
    <property type="evidence" value="ECO:0007669"/>
    <property type="project" value="UniProtKB-UniRule"/>
</dbReference>
<dbReference type="GO" id="GO:2001061">
    <property type="term" value="P:D-glycero-D-manno-heptose 7-phosphate biosynthetic process"/>
    <property type="evidence" value="ECO:0007669"/>
    <property type="project" value="UniProtKB-UniPathway"/>
</dbReference>
<dbReference type="CDD" id="cd05006">
    <property type="entry name" value="SIS_GmhA"/>
    <property type="match status" value="1"/>
</dbReference>
<dbReference type="Gene3D" id="3.40.50.10490">
    <property type="entry name" value="Glucose-6-phosphate isomerase like protein, domain 1"/>
    <property type="match status" value="1"/>
</dbReference>
<dbReference type="HAMAP" id="MF_00067">
    <property type="entry name" value="GmhA"/>
    <property type="match status" value="1"/>
</dbReference>
<dbReference type="InterPro" id="IPR035461">
    <property type="entry name" value="GmhA/DiaA"/>
</dbReference>
<dbReference type="InterPro" id="IPR004515">
    <property type="entry name" value="Phosphoheptose_Isoase"/>
</dbReference>
<dbReference type="InterPro" id="IPR001347">
    <property type="entry name" value="SIS_dom"/>
</dbReference>
<dbReference type="InterPro" id="IPR046348">
    <property type="entry name" value="SIS_dom_sf"/>
</dbReference>
<dbReference type="InterPro" id="IPR050099">
    <property type="entry name" value="SIS_GmhA/DiaA_subfam"/>
</dbReference>
<dbReference type="NCBIfam" id="TIGR00441">
    <property type="entry name" value="gmhA"/>
    <property type="match status" value="1"/>
</dbReference>
<dbReference type="NCBIfam" id="NF001628">
    <property type="entry name" value="PRK00414.1"/>
    <property type="match status" value="1"/>
</dbReference>
<dbReference type="PANTHER" id="PTHR30390:SF7">
    <property type="entry name" value="PHOSPHOHEPTOSE ISOMERASE"/>
    <property type="match status" value="1"/>
</dbReference>
<dbReference type="PANTHER" id="PTHR30390">
    <property type="entry name" value="SEDOHEPTULOSE 7-PHOSPHATE ISOMERASE / DNAA INITIATOR-ASSOCIATING FACTOR FOR REPLICATION INITIATION"/>
    <property type="match status" value="1"/>
</dbReference>
<dbReference type="Pfam" id="PF13580">
    <property type="entry name" value="SIS_2"/>
    <property type="match status" value="1"/>
</dbReference>
<dbReference type="SUPFAM" id="SSF53697">
    <property type="entry name" value="SIS domain"/>
    <property type="match status" value="1"/>
</dbReference>
<dbReference type="PROSITE" id="PS51464">
    <property type="entry name" value="SIS"/>
    <property type="match status" value="1"/>
</dbReference>
<proteinExistence type="inferred from homology"/>
<protein>
    <recommendedName>
        <fullName evidence="1">Phosphoheptose isomerase</fullName>
        <ecNumber evidence="1">5.3.1.28</ecNumber>
    </recommendedName>
    <alternativeName>
        <fullName evidence="1">Sedoheptulose 7-phosphate isomerase</fullName>
    </alternativeName>
</protein>
<name>GMHA_HISS2</name>
<organism>
    <name type="scientific">Histophilus somni (strain 2336)</name>
    <name type="common">Haemophilus somnus</name>
    <dbReference type="NCBI Taxonomy" id="228400"/>
    <lineage>
        <taxon>Bacteria</taxon>
        <taxon>Pseudomonadati</taxon>
        <taxon>Pseudomonadota</taxon>
        <taxon>Gammaproteobacteria</taxon>
        <taxon>Pasteurellales</taxon>
        <taxon>Pasteurellaceae</taxon>
        <taxon>Histophilus</taxon>
    </lineage>
</organism>